<organism>
    <name type="scientific">Bdellovibrio bacteriovorus (strain ATCC 15356 / DSM 50701 / NCIMB 9529 / HD100)</name>
    <dbReference type="NCBI Taxonomy" id="264462"/>
    <lineage>
        <taxon>Bacteria</taxon>
        <taxon>Pseudomonadati</taxon>
        <taxon>Bdellovibrionota</taxon>
        <taxon>Bdellovibrionia</taxon>
        <taxon>Bdellovibrionales</taxon>
        <taxon>Pseudobdellovibrionaceae</taxon>
        <taxon>Bdellovibrio</taxon>
    </lineage>
</organism>
<name>PDXH_BDEBA</name>
<proteinExistence type="inferred from homology"/>
<reference key="1">
    <citation type="journal article" date="2004" name="Science">
        <title>A predator unmasked: life cycle of Bdellovibrio bacteriovorus from a genomic perspective.</title>
        <authorList>
            <person name="Rendulic S."/>
            <person name="Jagtap P."/>
            <person name="Rosinus A."/>
            <person name="Eppinger M."/>
            <person name="Baar C."/>
            <person name="Lanz C."/>
            <person name="Keller H."/>
            <person name="Lambert C."/>
            <person name="Evans K.J."/>
            <person name="Goesmann A."/>
            <person name="Meyer F."/>
            <person name="Sockett R.E."/>
            <person name="Schuster S.C."/>
        </authorList>
    </citation>
    <scope>NUCLEOTIDE SEQUENCE [LARGE SCALE GENOMIC DNA]</scope>
    <source>
        <strain>ATCC 15356 / DSM 50701 / NCIMB 9529 / HD100</strain>
    </source>
</reference>
<keyword id="KW-0285">Flavoprotein</keyword>
<keyword id="KW-0288">FMN</keyword>
<keyword id="KW-0560">Oxidoreductase</keyword>
<keyword id="KW-0664">Pyridoxine biosynthesis</keyword>
<keyword id="KW-1185">Reference proteome</keyword>
<comment type="function">
    <text evidence="1">Catalyzes the oxidation of either pyridoxine 5'-phosphate (PNP) or pyridoxamine 5'-phosphate (PMP) into pyridoxal 5'-phosphate (PLP).</text>
</comment>
<comment type="catalytic activity">
    <reaction evidence="1">
        <text>pyridoxamine 5'-phosphate + O2 + H2O = pyridoxal 5'-phosphate + H2O2 + NH4(+)</text>
        <dbReference type="Rhea" id="RHEA:15817"/>
        <dbReference type="ChEBI" id="CHEBI:15377"/>
        <dbReference type="ChEBI" id="CHEBI:15379"/>
        <dbReference type="ChEBI" id="CHEBI:16240"/>
        <dbReference type="ChEBI" id="CHEBI:28938"/>
        <dbReference type="ChEBI" id="CHEBI:58451"/>
        <dbReference type="ChEBI" id="CHEBI:597326"/>
        <dbReference type="EC" id="1.4.3.5"/>
    </reaction>
</comment>
<comment type="catalytic activity">
    <reaction evidence="1">
        <text>pyridoxine 5'-phosphate + O2 = pyridoxal 5'-phosphate + H2O2</text>
        <dbReference type="Rhea" id="RHEA:15149"/>
        <dbReference type="ChEBI" id="CHEBI:15379"/>
        <dbReference type="ChEBI" id="CHEBI:16240"/>
        <dbReference type="ChEBI" id="CHEBI:58589"/>
        <dbReference type="ChEBI" id="CHEBI:597326"/>
        <dbReference type="EC" id="1.4.3.5"/>
    </reaction>
</comment>
<comment type="cofactor">
    <cofactor evidence="1">
        <name>FMN</name>
        <dbReference type="ChEBI" id="CHEBI:58210"/>
    </cofactor>
    <text evidence="1">Binds 1 FMN per subunit.</text>
</comment>
<comment type="pathway">
    <text evidence="1">Cofactor metabolism; pyridoxal 5'-phosphate salvage; pyridoxal 5'-phosphate from pyridoxamine 5'-phosphate: step 1/1.</text>
</comment>
<comment type="pathway">
    <text evidence="1">Cofactor metabolism; pyridoxal 5'-phosphate salvage; pyridoxal 5'-phosphate from pyridoxine 5'-phosphate: step 1/1.</text>
</comment>
<comment type="subunit">
    <text evidence="1">Homodimer.</text>
</comment>
<comment type="similarity">
    <text evidence="1">Belongs to the pyridoxamine 5'-phosphate oxidase family.</text>
</comment>
<feature type="chain" id="PRO_0000167686" description="Pyridoxine/pyridoxamine 5'-phosphate oxidase">
    <location>
        <begin position="1"/>
        <end position="196"/>
    </location>
</feature>
<feature type="binding site" evidence="1">
    <location>
        <position position="49"/>
    </location>
    <ligand>
        <name>substrate</name>
    </ligand>
</feature>
<feature type="binding site" evidence="1">
    <location>
        <position position="66"/>
    </location>
    <ligand>
        <name>FMN</name>
        <dbReference type="ChEBI" id="CHEBI:58210"/>
    </ligand>
</feature>
<feature type="binding site" evidence="1">
    <location>
        <position position="88"/>
    </location>
    <ligand>
        <name>FMN</name>
        <dbReference type="ChEBI" id="CHEBI:58210"/>
    </ligand>
</feature>
<feature type="binding site" evidence="1">
    <location>
        <position position="106"/>
    </location>
    <ligand>
        <name>substrate</name>
    </ligand>
</feature>
<feature type="binding site" evidence="1">
    <location>
        <position position="110"/>
    </location>
    <ligand>
        <name>substrate</name>
    </ligand>
</feature>
<feature type="binding site" evidence="1">
    <location>
        <position position="114"/>
    </location>
    <ligand>
        <name>substrate</name>
    </ligand>
</feature>
<feature type="binding site" evidence="1">
    <location>
        <begin position="123"/>
        <end position="124"/>
    </location>
    <ligand>
        <name>FMN</name>
        <dbReference type="ChEBI" id="CHEBI:58210"/>
    </ligand>
</feature>
<feature type="binding site" evidence="1">
    <location>
        <position position="168"/>
    </location>
    <ligand>
        <name>FMN</name>
        <dbReference type="ChEBI" id="CHEBI:58210"/>
    </ligand>
</feature>
<feature type="binding site" evidence="1">
    <location>
        <begin position="174"/>
        <end position="176"/>
    </location>
    <ligand>
        <name>substrate</name>
    </ligand>
</feature>
<feature type="binding site" evidence="1">
    <location>
        <position position="178"/>
    </location>
    <ligand>
        <name>FMN</name>
        <dbReference type="ChEBI" id="CHEBI:58210"/>
    </ligand>
</feature>
<gene>
    <name evidence="1" type="primary">pdxH</name>
    <name type="ordered locus">Bd2568</name>
</gene>
<protein>
    <recommendedName>
        <fullName evidence="1">Pyridoxine/pyridoxamine 5'-phosphate oxidase</fullName>
        <ecNumber evidence="1">1.4.3.5</ecNumber>
    </recommendedName>
    <alternativeName>
        <fullName evidence="1">PNP/PMP oxidase</fullName>
        <shortName evidence="1">PNPOx</shortName>
    </alternativeName>
    <alternativeName>
        <fullName evidence="1">Pyridoxal 5'-phosphate synthase</fullName>
    </alternativeName>
</protein>
<evidence type="ECO:0000255" key="1">
    <source>
        <dbReference type="HAMAP-Rule" id="MF_01629"/>
    </source>
</evidence>
<sequence length="196" mass="22590">MFDINKDPFEHFDRLMKEAVAKQIPEANAMSVATVDEKGVPSVRIVYLKEVSQGGFVFYGNYNSHKGKDIETNPIVCLNFHWPAIWQQIRITGKAEKISAAESDAYFATRARLSQIGAWASHQSETIPALDWLSRRVQEYEKQFDGQVVPRPPHWGGWRVIPTEIEFWFGLGGRLHERHIYQRTEDGGWKTFLRSP</sequence>
<dbReference type="EC" id="1.4.3.5" evidence="1"/>
<dbReference type="EMBL" id="BX842653">
    <property type="protein sequence ID" value="CAE80364.1"/>
    <property type="molecule type" value="Genomic_DNA"/>
</dbReference>
<dbReference type="RefSeq" id="WP_011164967.1">
    <property type="nucleotide sequence ID" value="NC_005363.1"/>
</dbReference>
<dbReference type="SMR" id="Q6MK45"/>
<dbReference type="STRING" id="264462.Bd2568"/>
<dbReference type="GeneID" id="93013468"/>
<dbReference type="KEGG" id="bba:Bd2568"/>
<dbReference type="eggNOG" id="COG0259">
    <property type="taxonomic scope" value="Bacteria"/>
</dbReference>
<dbReference type="HOGENOM" id="CLU_032263_2_2_7"/>
<dbReference type="UniPathway" id="UPA01068">
    <property type="reaction ID" value="UER00304"/>
</dbReference>
<dbReference type="UniPathway" id="UPA01068">
    <property type="reaction ID" value="UER00305"/>
</dbReference>
<dbReference type="Proteomes" id="UP000008080">
    <property type="component" value="Chromosome"/>
</dbReference>
<dbReference type="GO" id="GO:0010181">
    <property type="term" value="F:FMN binding"/>
    <property type="evidence" value="ECO:0007669"/>
    <property type="project" value="InterPro"/>
</dbReference>
<dbReference type="GO" id="GO:0004733">
    <property type="term" value="F:pyridoxamine phosphate oxidase activity"/>
    <property type="evidence" value="ECO:0007669"/>
    <property type="project" value="UniProtKB-EC"/>
</dbReference>
<dbReference type="GO" id="GO:0008615">
    <property type="term" value="P:pyridoxine biosynthetic process"/>
    <property type="evidence" value="ECO:0007669"/>
    <property type="project" value="UniProtKB-KW"/>
</dbReference>
<dbReference type="Gene3D" id="2.30.110.10">
    <property type="entry name" value="Electron Transport, Fmn-binding Protein, Chain A"/>
    <property type="match status" value="1"/>
</dbReference>
<dbReference type="HAMAP" id="MF_01629">
    <property type="entry name" value="PdxH"/>
    <property type="match status" value="1"/>
</dbReference>
<dbReference type="InterPro" id="IPR000659">
    <property type="entry name" value="Pyridox_Oxase"/>
</dbReference>
<dbReference type="InterPro" id="IPR019740">
    <property type="entry name" value="Pyridox_Oxase_CS"/>
</dbReference>
<dbReference type="InterPro" id="IPR011576">
    <property type="entry name" value="Pyridox_Oxase_N"/>
</dbReference>
<dbReference type="InterPro" id="IPR019576">
    <property type="entry name" value="Pyridoxamine_oxidase_dimer_C"/>
</dbReference>
<dbReference type="InterPro" id="IPR012349">
    <property type="entry name" value="Split_barrel_FMN-bd"/>
</dbReference>
<dbReference type="NCBIfam" id="TIGR00558">
    <property type="entry name" value="pdxH"/>
    <property type="match status" value="1"/>
</dbReference>
<dbReference type="NCBIfam" id="NF004231">
    <property type="entry name" value="PRK05679.1"/>
    <property type="match status" value="1"/>
</dbReference>
<dbReference type="PANTHER" id="PTHR10851:SF0">
    <property type="entry name" value="PYRIDOXINE-5'-PHOSPHATE OXIDASE"/>
    <property type="match status" value="1"/>
</dbReference>
<dbReference type="PANTHER" id="PTHR10851">
    <property type="entry name" value="PYRIDOXINE-5-PHOSPHATE OXIDASE"/>
    <property type="match status" value="1"/>
</dbReference>
<dbReference type="Pfam" id="PF10590">
    <property type="entry name" value="PNP_phzG_C"/>
    <property type="match status" value="1"/>
</dbReference>
<dbReference type="Pfam" id="PF01243">
    <property type="entry name" value="PNPOx_N"/>
    <property type="match status" value="1"/>
</dbReference>
<dbReference type="PIRSF" id="PIRSF000190">
    <property type="entry name" value="Pyd_amn-ph_oxd"/>
    <property type="match status" value="1"/>
</dbReference>
<dbReference type="SUPFAM" id="SSF50475">
    <property type="entry name" value="FMN-binding split barrel"/>
    <property type="match status" value="1"/>
</dbReference>
<dbReference type="PROSITE" id="PS01064">
    <property type="entry name" value="PYRIDOX_OXIDASE"/>
    <property type="match status" value="1"/>
</dbReference>
<accession>Q6MK45</accession>